<protein>
    <recommendedName>
        <fullName evidence="1">Crossover junction endodeoxyribonuclease RuvC</fullName>
        <ecNumber evidence="1">3.1.21.10</ecNumber>
    </recommendedName>
    <alternativeName>
        <fullName evidence="1">Holliday junction nuclease RuvC</fullName>
    </alternativeName>
    <alternativeName>
        <fullName evidence="1">Holliday junction resolvase RuvC</fullName>
    </alternativeName>
</protein>
<accession>B8EA73</accession>
<dbReference type="EC" id="3.1.21.10" evidence="1"/>
<dbReference type="EMBL" id="CP001252">
    <property type="protein sequence ID" value="ACK46546.1"/>
    <property type="molecule type" value="Genomic_DNA"/>
</dbReference>
<dbReference type="RefSeq" id="WP_006081743.1">
    <property type="nucleotide sequence ID" value="NC_011663.1"/>
</dbReference>
<dbReference type="SMR" id="B8EA73"/>
<dbReference type="GeneID" id="11772538"/>
<dbReference type="KEGG" id="sbp:Sbal223_2042"/>
<dbReference type="HOGENOM" id="CLU_091257_2_1_6"/>
<dbReference type="Proteomes" id="UP000002507">
    <property type="component" value="Chromosome"/>
</dbReference>
<dbReference type="GO" id="GO:0005737">
    <property type="term" value="C:cytoplasm"/>
    <property type="evidence" value="ECO:0007669"/>
    <property type="project" value="UniProtKB-SubCell"/>
</dbReference>
<dbReference type="GO" id="GO:0048476">
    <property type="term" value="C:Holliday junction resolvase complex"/>
    <property type="evidence" value="ECO:0007669"/>
    <property type="project" value="UniProtKB-UniRule"/>
</dbReference>
<dbReference type="GO" id="GO:0008821">
    <property type="term" value="F:crossover junction DNA endonuclease activity"/>
    <property type="evidence" value="ECO:0007669"/>
    <property type="project" value="UniProtKB-UniRule"/>
</dbReference>
<dbReference type="GO" id="GO:0003677">
    <property type="term" value="F:DNA binding"/>
    <property type="evidence" value="ECO:0007669"/>
    <property type="project" value="UniProtKB-KW"/>
</dbReference>
<dbReference type="GO" id="GO:0000287">
    <property type="term" value="F:magnesium ion binding"/>
    <property type="evidence" value="ECO:0007669"/>
    <property type="project" value="UniProtKB-UniRule"/>
</dbReference>
<dbReference type="GO" id="GO:0006310">
    <property type="term" value="P:DNA recombination"/>
    <property type="evidence" value="ECO:0007669"/>
    <property type="project" value="UniProtKB-UniRule"/>
</dbReference>
<dbReference type="GO" id="GO:0006281">
    <property type="term" value="P:DNA repair"/>
    <property type="evidence" value="ECO:0007669"/>
    <property type="project" value="UniProtKB-UniRule"/>
</dbReference>
<dbReference type="CDD" id="cd16962">
    <property type="entry name" value="RuvC"/>
    <property type="match status" value="1"/>
</dbReference>
<dbReference type="FunFam" id="3.30.420.10:FF:000002">
    <property type="entry name" value="Crossover junction endodeoxyribonuclease RuvC"/>
    <property type="match status" value="1"/>
</dbReference>
<dbReference type="Gene3D" id="3.30.420.10">
    <property type="entry name" value="Ribonuclease H-like superfamily/Ribonuclease H"/>
    <property type="match status" value="1"/>
</dbReference>
<dbReference type="HAMAP" id="MF_00034">
    <property type="entry name" value="RuvC"/>
    <property type="match status" value="1"/>
</dbReference>
<dbReference type="InterPro" id="IPR012337">
    <property type="entry name" value="RNaseH-like_sf"/>
</dbReference>
<dbReference type="InterPro" id="IPR036397">
    <property type="entry name" value="RNaseH_sf"/>
</dbReference>
<dbReference type="InterPro" id="IPR020563">
    <property type="entry name" value="X-over_junc_endoDNase_Mg_BS"/>
</dbReference>
<dbReference type="InterPro" id="IPR002176">
    <property type="entry name" value="X-over_junc_endoDNase_RuvC"/>
</dbReference>
<dbReference type="NCBIfam" id="NF000711">
    <property type="entry name" value="PRK00039.2-1"/>
    <property type="match status" value="1"/>
</dbReference>
<dbReference type="NCBIfam" id="TIGR00228">
    <property type="entry name" value="ruvC"/>
    <property type="match status" value="1"/>
</dbReference>
<dbReference type="PANTHER" id="PTHR30194">
    <property type="entry name" value="CROSSOVER JUNCTION ENDODEOXYRIBONUCLEASE RUVC"/>
    <property type="match status" value="1"/>
</dbReference>
<dbReference type="PANTHER" id="PTHR30194:SF3">
    <property type="entry name" value="CROSSOVER JUNCTION ENDODEOXYRIBONUCLEASE RUVC"/>
    <property type="match status" value="1"/>
</dbReference>
<dbReference type="Pfam" id="PF02075">
    <property type="entry name" value="RuvC"/>
    <property type="match status" value="1"/>
</dbReference>
<dbReference type="PRINTS" id="PR00696">
    <property type="entry name" value="RSOLVASERUVC"/>
</dbReference>
<dbReference type="SUPFAM" id="SSF53098">
    <property type="entry name" value="Ribonuclease H-like"/>
    <property type="match status" value="1"/>
</dbReference>
<dbReference type="PROSITE" id="PS01321">
    <property type="entry name" value="RUVC"/>
    <property type="match status" value="1"/>
</dbReference>
<organism>
    <name type="scientific">Shewanella baltica (strain OS223)</name>
    <dbReference type="NCBI Taxonomy" id="407976"/>
    <lineage>
        <taxon>Bacteria</taxon>
        <taxon>Pseudomonadati</taxon>
        <taxon>Pseudomonadota</taxon>
        <taxon>Gammaproteobacteria</taxon>
        <taxon>Alteromonadales</taxon>
        <taxon>Shewanellaceae</taxon>
        <taxon>Shewanella</taxon>
    </lineage>
</organism>
<gene>
    <name evidence="1" type="primary">ruvC</name>
    <name type="ordered locus">Sbal223_2042</name>
</gene>
<keyword id="KW-0963">Cytoplasm</keyword>
<keyword id="KW-0227">DNA damage</keyword>
<keyword id="KW-0233">DNA recombination</keyword>
<keyword id="KW-0234">DNA repair</keyword>
<keyword id="KW-0238">DNA-binding</keyword>
<keyword id="KW-0255">Endonuclease</keyword>
<keyword id="KW-0378">Hydrolase</keyword>
<keyword id="KW-0460">Magnesium</keyword>
<keyword id="KW-0479">Metal-binding</keyword>
<keyword id="KW-0540">Nuclease</keyword>
<reference key="1">
    <citation type="submission" date="2008-12" db="EMBL/GenBank/DDBJ databases">
        <title>Complete sequence of chromosome of Shewanella baltica OS223.</title>
        <authorList>
            <consortium name="US DOE Joint Genome Institute"/>
            <person name="Lucas S."/>
            <person name="Copeland A."/>
            <person name="Lapidus A."/>
            <person name="Glavina del Rio T."/>
            <person name="Dalin E."/>
            <person name="Tice H."/>
            <person name="Bruce D."/>
            <person name="Goodwin L."/>
            <person name="Pitluck S."/>
            <person name="Chertkov O."/>
            <person name="Meincke L."/>
            <person name="Brettin T."/>
            <person name="Detter J.C."/>
            <person name="Han C."/>
            <person name="Kuske C.R."/>
            <person name="Larimer F."/>
            <person name="Land M."/>
            <person name="Hauser L."/>
            <person name="Kyrpides N."/>
            <person name="Ovchinnikova G."/>
            <person name="Brettar I."/>
            <person name="Rodrigues J."/>
            <person name="Konstantinidis K."/>
            <person name="Tiedje J."/>
        </authorList>
    </citation>
    <scope>NUCLEOTIDE SEQUENCE [LARGE SCALE GENOMIC DNA]</scope>
    <source>
        <strain>OS223</strain>
    </source>
</reference>
<sequence>MAIILGVDPGSRITGYGVIQCQGRHQIYLGSGCIRTSSEELPGRLKQIFDGITEIIRQYQPDEFAIERVFMAKNADSALKLGQARGAAIVAATVANLPVAEYSATQIKSAVVGTGRAQKAQVQHMIQQLLKLPAAPQADAADALGVAVCHYHTSQSLIALSGRATARTYGRYR</sequence>
<proteinExistence type="inferred from homology"/>
<name>RUVC_SHEB2</name>
<comment type="function">
    <text evidence="1">The RuvA-RuvB-RuvC complex processes Holliday junction (HJ) DNA during genetic recombination and DNA repair. Endonuclease that resolves HJ intermediates. Cleaves cruciform DNA by making single-stranded nicks across the HJ at symmetrical positions within the homologous arms, yielding a 5'-phosphate and a 3'-hydroxyl group; requires a central core of homology in the junction. The consensus cleavage sequence is 5'-(A/T)TT(C/G)-3'. Cleavage occurs on the 3'-side of the TT dinucleotide at the point of strand exchange. HJ branch migration catalyzed by RuvA-RuvB allows RuvC to scan DNA until it finds its consensus sequence, where it cleaves and resolves the cruciform DNA.</text>
</comment>
<comment type="catalytic activity">
    <reaction evidence="1">
        <text>Endonucleolytic cleavage at a junction such as a reciprocal single-stranded crossover between two homologous DNA duplexes (Holliday junction).</text>
        <dbReference type="EC" id="3.1.21.10"/>
    </reaction>
</comment>
<comment type="cofactor">
    <cofactor evidence="1">
        <name>Mg(2+)</name>
        <dbReference type="ChEBI" id="CHEBI:18420"/>
    </cofactor>
    <text evidence="1">Binds 2 Mg(2+) ion per subunit.</text>
</comment>
<comment type="subunit">
    <text evidence="1">Homodimer which binds Holliday junction (HJ) DNA. The HJ becomes 2-fold symmetrical on binding to RuvC with unstacked arms; it has a different conformation from HJ DNA in complex with RuvA. In the full resolvosome a probable DNA-RuvA(4)-RuvB(12)-RuvC(2) complex forms which resolves the HJ.</text>
</comment>
<comment type="subcellular location">
    <subcellularLocation>
        <location evidence="1">Cytoplasm</location>
    </subcellularLocation>
</comment>
<comment type="similarity">
    <text evidence="1">Belongs to the RuvC family.</text>
</comment>
<feature type="chain" id="PRO_1000195272" description="Crossover junction endodeoxyribonuclease RuvC">
    <location>
        <begin position="1"/>
        <end position="173"/>
    </location>
</feature>
<feature type="active site" evidence="1">
    <location>
        <position position="8"/>
    </location>
</feature>
<feature type="active site" evidence="1">
    <location>
        <position position="67"/>
    </location>
</feature>
<feature type="active site" evidence="1">
    <location>
        <position position="139"/>
    </location>
</feature>
<feature type="binding site" evidence="1">
    <location>
        <position position="8"/>
    </location>
    <ligand>
        <name>Mg(2+)</name>
        <dbReference type="ChEBI" id="CHEBI:18420"/>
        <label>1</label>
    </ligand>
</feature>
<feature type="binding site" evidence="1">
    <location>
        <position position="67"/>
    </location>
    <ligand>
        <name>Mg(2+)</name>
        <dbReference type="ChEBI" id="CHEBI:18420"/>
        <label>2</label>
    </ligand>
</feature>
<feature type="binding site" evidence="1">
    <location>
        <position position="139"/>
    </location>
    <ligand>
        <name>Mg(2+)</name>
        <dbReference type="ChEBI" id="CHEBI:18420"/>
        <label>1</label>
    </ligand>
</feature>
<evidence type="ECO:0000255" key="1">
    <source>
        <dbReference type="HAMAP-Rule" id="MF_00034"/>
    </source>
</evidence>